<sequence>MDKLIKSIAKSGSFRAYVLDSTETVRTAQEEHQSLSSSTVALGRTLIANQILAANQKGDSKVTVKVIGDSSFGHIISVADTKGNVKGYIQNAGVDVKKTASGEVIVGPFMGNGQFVVITDYGTGNPYTSSTPLVSGEIGEDLAYYLTESEQTPSAVGLNVLLDEKDKVKVAGGFMLQVLPEASEEEITRYEKRIQEMPAISTLLESEDHIEALLKAIYGEEDYKVLVEEDLQFTCDCSRQRFEAALMTLSKSDLKEMKEEDHGAEIVCQFCGKKYQFKESDLEEMINDKA</sequence>
<evidence type="ECO:0000255" key="1">
    <source>
        <dbReference type="HAMAP-Rule" id="MF_00117"/>
    </source>
</evidence>
<evidence type="ECO:0000305" key="2"/>
<comment type="function">
    <text evidence="1">Redox regulated molecular chaperone. Protects both thermally unfolding and oxidatively damaged proteins from irreversible aggregation. Plays an important role in the bacterial defense system toward oxidative stress.</text>
</comment>
<comment type="subcellular location">
    <subcellularLocation>
        <location evidence="1">Cytoplasm</location>
    </subcellularLocation>
</comment>
<comment type="PTM">
    <text evidence="1">Under oxidizing conditions two disulfide bonds are formed involving the reactive cysteines. Under reducing conditions zinc is bound to the reactive cysteines and the protein is inactive.</text>
</comment>
<comment type="similarity">
    <text evidence="1">Belongs to the HSP33 family.</text>
</comment>
<comment type="sequence caution" evidence="2">
    <conflict type="erroneous initiation">
        <sequence resource="EMBL-CDS" id="AAN57963"/>
    </conflict>
</comment>
<reference key="1">
    <citation type="journal article" date="2002" name="Proc. Natl. Acad. Sci. U.S.A.">
        <title>Genome sequence of Streptococcus mutans UA159, a cariogenic dental pathogen.</title>
        <authorList>
            <person name="Ajdic D.J."/>
            <person name="McShan W.M."/>
            <person name="McLaughlin R.E."/>
            <person name="Savic G."/>
            <person name="Chang J."/>
            <person name="Carson M.B."/>
            <person name="Primeaux C."/>
            <person name="Tian R."/>
            <person name="Kenton S."/>
            <person name="Jia H.G."/>
            <person name="Lin S.P."/>
            <person name="Qian Y."/>
            <person name="Li S."/>
            <person name="Zhu H."/>
            <person name="Najar F.Z."/>
            <person name="Lai H."/>
            <person name="White J."/>
            <person name="Roe B.A."/>
            <person name="Ferretti J.J."/>
        </authorList>
    </citation>
    <scope>NUCLEOTIDE SEQUENCE [LARGE SCALE GENOMIC DNA]</scope>
    <source>
        <strain>ATCC 700610 / UA159</strain>
    </source>
</reference>
<name>HSLO_STRMU</name>
<dbReference type="EMBL" id="AE014133">
    <property type="protein sequence ID" value="AAN57963.1"/>
    <property type="status" value="ALT_INIT"/>
    <property type="molecule type" value="Genomic_DNA"/>
</dbReference>
<dbReference type="RefSeq" id="NP_720657.1">
    <property type="nucleotide sequence ID" value="NC_004350.2"/>
</dbReference>
<dbReference type="RefSeq" id="WP_002262034.1">
    <property type="nucleotide sequence ID" value="NC_004350.2"/>
</dbReference>
<dbReference type="SMR" id="Q8CWZ3"/>
<dbReference type="STRING" id="210007.SMU_188c"/>
<dbReference type="KEGG" id="smu:SMU_188c"/>
<dbReference type="PATRIC" id="fig|210007.7.peg.163"/>
<dbReference type="eggNOG" id="COG1281">
    <property type="taxonomic scope" value="Bacteria"/>
</dbReference>
<dbReference type="HOGENOM" id="CLU_054493_1_0_9"/>
<dbReference type="OrthoDB" id="9776534at2"/>
<dbReference type="Proteomes" id="UP000002512">
    <property type="component" value="Chromosome"/>
</dbReference>
<dbReference type="GO" id="GO:0005737">
    <property type="term" value="C:cytoplasm"/>
    <property type="evidence" value="ECO:0007669"/>
    <property type="project" value="UniProtKB-SubCell"/>
</dbReference>
<dbReference type="GO" id="GO:0044183">
    <property type="term" value="F:protein folding chaperone"/>
    <property type="evidence" value="ECO:0007669"/>
    <property type="project" value="TreeGrafter"/>
</dbReference>
<dbReference type="GO" id="GO:0051082">
    <property type="term" value="F:unfolded protein binding"/>
    <property type="evidence" value="ECO:0007669"/>
    <property type="project" value="UniProtKB-UniRule"/>
</dbReference>
<dbReference type="GO" id="GO:0042026">
    <property type="term" value="P:protein refolding"/>
    <property type="evidence" value="ECO:0007669"/>
    <property type="project" value="TreeGrafter"/>
</dbReference>
<dbReference type="CDD" id="cd00498">
    <property type="entry name" value="Hsp33"/>
    <property type="match status" value="1"/>
</dbReference>
<dbReference type="Gene3D" id="3.55.30.10">
    <property type="entry name" value="Hsp33 domain"/>
    <property type="match status" value="1"/>
</dbReference>
<dbReference type="Gene3D" id="3.90.1280.10">
    <property type="entry name" value="HSP33 redox switch-like"/>
    <property type="match status" value="1"/>
</dbReference>
<dbReference type="HAMAP" id="MF_00117">
    <property type="entry name" value="HslO"/>
    <property type="match status" value="1"/>
</dbReference>
<dbReference type="InterPro" id="IPR000397">
    <property type="entry name" value="Heat_shock_Hsp33"/>
</dbReference>
<dbReference type="InterPro" id="IPR016154">
    <property type="entry name" value="Heat_shock_Hsp33_C"/>
</dbReference>
<dbReference type="InterPro" id="IPR016153">
    <property type="entry name" value="Heat_shock_Hsp33_N"/>
</dbReference>
<dbReference type="NCBIfam" id="NF001033">
    <property type="entry name" value="PRK00114.1"/>
    <property type="match status" value="1"/>
</dbReference>
<dbReference type="PANTHER" id="PTHR30111">
    <property type="entry name" value="33 KDA CHAPERONIN"/>
    <property type="match status" value="1"/>
</dbReference>
<dbReference type="PANTHER" id="PTHR30111:SF1">
    <property type="entry name" value="33 KDA CHAPERONIN"/>
    <property type="match status" value="1"/>
</dbReference>
<dbReference type="Pfam" id="PF01430">
    <property type="entry name" value="HSP33"/>
    <property type="match status" value="1"/>
</dbReference>
<dbReference type="PIRSF" id="PIRSF005261">
    <property type="entry name" value="Heat_shock_Hsp33"/>
    <property type="match status" value="1"/>
</dbReference>
<dbReference type="SUPFAM" id="SSF64397">
    <property type="entry name" value="Hsp33 domain"/>
    <property type="match status" value="1"/>
</dbReference>
<dbReference type="SUPFAM" id="SSF118352">
    <property type="entry name" value="HSP33 redox switch-like"/>
    <property type="match status" value="1"/>
</dbReference>
<feature type="chain" id="PRO_0000192209" description="33 kDa chaperonin">
    <location>
        <begin position="1"/>
        <end position="290"/>
    </location>
</feature>
<feature type="disulfide bond" description="Redox-active" evidence="1">
    <location>
        <begin position="235"/>
        <end position="237"/>
    </location>
</feature>
<feature type="disulfide bond" description="Redox-active" evidence="1">
    <location>
        <begin position="268"/>
        <end position="271"/>
    </location>
</feature>
<proteinExistence type="inferred from homology"/>
<accession>Q8CWZ3</accession>
<organism>
    <name type="scientific">Streptococcus mutans serotype c (strain ATCC 700610 / UA159)</name>
    <dbReference type="NCBI Taxonomy" id="210007"/>
    <lineage>
        <taxon>Bacteria</taxon>
        <taxon>Bacillati</taxon>
        <taxon>Bacillota</taxon>
        <taxon>Bacilli</taxon>
        <taxon>Lactobacillales</taxon>
        <taxon>Streptococcaceae</taxon>
        <taxon>Streptococcus</taxon>
    </lineage>
</organism>
<protein>
    <recommendedName>
        <fullName evidence="1">33 kDa chaperonin</fullName>
    </recommendedName>
    <alternativeName>
        <fullName evidence="1">Heat shock protein 33 homolog</fullName>
        <shortName evidence="1">HSP33</shortName>
    </alternativeName>
</protein>
<gene>
    <name evidence="1" type="primary">hslO</name>
    <name type="ordered locus">SMU_188c</name>
</gene>
<keyword id="KW-0143">Chaperone</keyword>
<keyword id="KW-0963">Cytoplasm</keyword>
<keyword id="KW-1015">Disulfide bond</keyword>
<keyword id="KW-0676">Redox-active center</keyword>
<keyword id="KW-1185">Reference proteome</keyword>
<keyword id="KW-0862">Zinc</keyword>